<feature type="chain" id="PRO_0000117632" description="NADH-ubiquinone oxidoreductase chain 2">
    <location>
        <begin position="1"/>
        <end position="344"/>
    </location>
</feature>
<feature type="transmembrane region" description="Helical" evidence="2">
    <location>
        <begin position="1"/>
        <end position="21"/>
    </location>
</feature>
<feature type="transmembrane region" description="Helical" evidence="2">
    <location>
        <begin position="24"/>
        <end position="44"/>
    </location>
</feature>
<feature type="transmembrane region" description="Helical" evidence="2">
    <location>
        <begin position="59"/>
        <end position="79"/>
    </location>
</feature>
<feature type="transmembrane region" description="Helical" evidence="2">
    <location>
        <begin position="94"/>
        <end position="114"/>
    </location>
</feature>
<feature type="transmembrane region" description="Helical" evidence="2">
    <location>
        <begin position="121"/>
        <end position="141"/>
    </location>
</feature>
<feature type="transmembrane region" description="Helical" evidence="2">
    <location>
        <begin position="150"/>
        <end position="170"/>
    </location>
</feature>
<feature type="transmembrane region" description="Helical" evidence="2">
    <location>
        <begin position="177"/>
        <end position="197"/>
    </location>
</feature>
<feature type="transmembrane region" description="Helical" evidence="2">
    <location>
        <begin position="201"/>
        <end position="221"/>
    </location>
</feature>
<feature type="transmembrane region" description="Helical" evidence="2">
    <location>
        <begin position="245"/>
        <end position="265"/>
    </location>
</feature>
<feature type="transmembrane region" description="Helical" evidence="2">
    <location>
        <begin position="273"/>
        <end position="293"/>
    </location>
</feature>
<feature type="transmembrane region" description="Helical" evidence="2">
    <location>
        <begin position="324"/>
        <end position="344"/>
    </location>
</feature>
<proteinExistence type="inferred from homology"/>
<keyword id="KW-0249">Electron transport</keyword>
<keyword id="KW-0472">Membrane</keyword>
<keyword id="KW-0496">Mitochondrion</keyword>
<keyword id="KW-0999">Mitochondrion inner membrane</keyword>
<keyword id="KW-0520">NAD</keyword>
<keyword id="KW-0679">Respiratory chain</keyword>
<keyword id="KW-1278">Translocase</keyword>
<keyword id="KW-0812">Transmembrane</keyword>
<keyword id="KW-1133">Transmembrane helix</keyword>
<keyword id="KW-0813">Transport</keyword>
<keyword id="KW-0830">Ubiquinone</keyword>
<reference key="1">
    <citation type="journal article" date="1987" name="Nippon Ika Daigaku Zasshi">
        <title>Cloning of the entire mitochondrial genome of Rana catesbeiana and nucleotide sequencing of the URF2 and its flanking genes.</title>
        <authorList>
            <person name="Fujii H."/>
        </authorList>
    </citation>
    <scope>NUCLEOTIDE SEQUENCE [GENOMIC DNA]</scope>
</reference>
<reference key="2">
    <citation type="journal article" date="1988" name="J. Biochem.">
        <title>Cloning of the mitochondrial genome of Rana catesbeiana and the nucleotide sequences of the ND2 and five tRNA genes.</title>
        <authorList>
            <person name="Fujii H."/>
            <person name="Shimada T."/>
            <person name="Goto Y."/>
            <person name="Okazaki T."/>
        </authorList>
    </citation>
    <scope>NUCLEOTIDE SEQUENCE [GENOMIC DNA]</scope>
</reference>
<reference key="3">
    <citation type="journal article" date="1987" name="Nippon Ika Daigaku Zasshi">
        <title>The nucleotide sequences of the heavy and light strand replication origins of the Rana catesbeiana mitochondrial genome.</title>
        <authorList>
            <person name="Yoneyama Y."/>
        </authorList>
    </citation>
    <scope>NUCLEOTIDE SEQUENCE [GENOMIC DNA] OF 325-344</scope>
</reference>
<geneLocation type="mitochondrion"/>
<comment type="function">
    <text evidence="1">Core subunit of the mitochondrial membrane respiratory chain NADH dehydrogenase (Complex I) that is believed to belong to the minimal assembly required for catalysis. Complex I functions in the transfer of electrons from NADH to the respiratory chain. The immediate electron acceptor for the enzyme is believed to be ubiquinone (By similarity).</text>
</comment>
<comment type="catalytic activity">
    <reaction>
        <text>a ubiquinone + NADH + 5 H(+)(in) = a ubiquinol + NAD(+) + 4 H(+)(out)</text>
        <dbReference type="Rhea" id="RHEA:29091"/>
        <dbReference type="Rhea" id="RHEA-COMP:9565"/>
        <dbReference type="Rhea" id="RHEA-COMP:9566"/>
        <dbReference type="ChEBI" id="CHEBI:15378"/>
        <dbReference type="ChEBI" id="CHEBI:16389"/>
        <dbReference type="ChEBI" id="CHEBI:17976"/>
        <dbReference type="ChEBI" id="CHEBI:57540"/>
        <dbReference type="ChEBI" id="CHEBI:57945"/>
        <dbReference type="EC" id="7.1.1.2"/>
    </reaction>
</comment>
<comment type="subcellular location">
    <subcellularLocation>
        <location>Mitochondrion inner membrane</location>
        <topology>Multi-pass membrane protein</topology>
    </subcellularLocation>
</comment>
<comment type="similarity">
    <text evidence="3">Belongs to the complex I subunit 2 family.</text>
</comment>
<protein>
    <recommendedName>
        <fullName>NADH-ubiquinone oxidoreductase chain 2</fullName>
        <ecNumber>7.1.1.2</ecNumber>
    </recommendedName>
    <alternativeName>
        <fullName>NADH dehydrogenase subunit 2</fullName>
    </alternativeName>
</protein>
<gene>
    <name type="primary">MT-ND2</name>
    <name type="synonym">MTND2</name>
    <name type="synonym">NADH2</name>
    <name type="synonym">ND2</name>
</gene>
<dbReference type="EC" id="7.1.1.2"/>
<dbReference type="EMBL" id="D10368">
    <property type="status" value="NOT_ANNOTATED_CDS"/>
    <property type="molecule type" value="Genomic_DNA"/>
</dbReference>
<dbReference type="EMBL" id="D12695">
    <property type="protein sequence ID" value="BAA02192.1"/>
    <property type="molecule type" value="Genomic_DNA"/>
</dbReference>
<dbReference type="PIR" id="A41451">
    <property type="entry name" value="QXFG2B"/>
</dbReference>
<dbReference type="SMR" id="P16673"/>
<dbReference type="GO" id="GO:0005743">
    <property type="term" value="C:mitochondrial inner membrane"/>
    <property type="evidence" value="ECO:0007669"/>
    <property type="project" value="UniProtKB-SubCell"/>
</dbReference>
<dbReference type="GO" id="GO:0008137">
    <property type="term" value="F:NADH dehydrogenase (ubiquinone) activity"/>
    <property type="evidence" value="ECO:0007669"/>
    <property type="project" value="UniProtKB-EC"/>
</dbReference>
<dbReference type="GO" id="GO:0006120">
    <property type="term" value="P:mitochondrial electron transport, NADH to ubiquinone"/>
    <property type="evidence" value="ECO:0007669"/>
    <property type="project" value="InterPro"/>
</dbReference>
<dbReference type="InterPro" id="IPR050175">
    <property type="entry name" value="Complex_I_Subunit_2"/>
</dbReference>
<dbReference type="InterPro" id="IPR010933">
    <property type="entry name" value="NADH_DH_su2_C"/>
</dbReference>
<dbReference type="InterPro" id="IPR003917">
    <property type="entry name" value="NADH_UbQ_OxRdtase_chain2"/>
</dbReference>
<dbReference type="InterPro" id="IPR001750">
    <property type="entry name" value="ND/Mrp_TM"/>
</dbReference>
<dbReference type="PANTHER" id="PTHR46552">
    <property type="entry name" value="NADH-UBIQUINONE OXIDOREDUCTASE CHAIN 2"/>
    <property type="match status" value="1"/>
</dbReference>
<dbReference type="PANTHER" id="PTHR46552:SF1">
    <property type="entry name" value="NADH-UBIQUINONE OXIDOREDUCTASE CHAIN 2"/>
    <property type="match status" value="1"/>
</dbReference>
<dbReference type="Pfam" id="PF06444">
    <property type="entry name" value="NADH_dehy_S2_C"/>
    <property type="match status" value="1"/>
</dbReference>
<dbReference type="Pfam" id="PF00361">
    <property type="entry name" value="Proton_antipo_M"/>
    <property type="match status" value="1"/>
</dbReference>
<dbReference type="PRINTS" id="PR01436">
    <property type="entry name" value="NADHDHGNASE2"/>
</dbReference>
<evidence type="ECO:0000250" key="1"/>
<evidence type="ECO:0000255" key="2"/>
<evidence type="ECO:0000305" key="3"/>
<name>NU2M_AQUCT</name>
<organism>
    <name type="scientific">Aquarana catesbeiana</name>
    <name type="common">American bullfrog</name>
    <name type="synonym">Rana catesbeiana</name>
    <dbReference type="NCBI Taxonomy" id="8400"/>
    <lineage>
        <taxon>Eukaryota</taxon>
        <taxon>Metazoa</taxon>
        <taxon>Chordata</taxon>
        <taxon>Craniata</taxon>
        <taxon>Vertebrata</taxon>
        <taxon>Euteleostomi</taxon>
        <taxon>Amphibia</taxon>
        <taxon>Batrachia</taxon>
        <taxon>Anura</taxon>
        <taxon>Neobatrachia</taxon>
        <taxon>Ranoidea</taxon>
        <taxon>Ranidae</taxon>
        <taxon>Aquarana</taxon>
    </lineage>
</organism>
<sequence length="344" mass="37625">MNPLALTIFLLSLAIGTTITLSSFHWLLAWIGLEINTLAIIPLMTKTPHPRAIEAATKYFLTQAAASALVLFSSLISAWQTGEWSINSLMDLPMNILSIALMMKLGLAPLHFWIPEVLQGISLPTGLILSTWQKIAPMALLLQTSHLINLNLTIALGLTSIMVGGWGGIGQTQLRKIMAFSSIGHLGWIIVILKFDPQLSLLNFVLYIIMTAAMFMSLTTISATKMLEISTSWSKTPALTTTTMLILLSLAGLPPLTGFTPKLLITLELVKQNATLLAVMVMFISLLALFFYIRLTYVVTLTLSPNTPNSLLTWRTASRSYSTTAIMNTMALILLPITPTLLLL</sequence>
<accession>P16673</accession>